<proteinExistence type="inferred from homology"/>
<name>RPOB_SALSV</name>
<reference key="1">
    <citation type="journal article" date="2011" name="J. Bacteriol.">
        <title>Comparative genomics of 28 Salmonella enterica isolates: evidence for CRISPR-mediated adaptive sublineage evolution.</title>
        <authorList>
            <person name="Fricke W.F."/>
            <person name="Mammel M.K."/>
            <person name="McDermott P.F."/>
            <person name="Tartera C."/>
            <person name="White D.G."/>
            <person name="Leclerc J.E."/>
            <person name="Ravel J."/>
            <person name="Cebula T.A."/>
        </authorList>
    </citation>
    <scope>NUCLEOTIDE SEQUENCE [LARGE SCALE GENOMIC DNA]</scope>
    <source>
        <strain>CVM19633</strain>
    </source>
</reference>
<feature type="chain" id="PRO_1000141736" description="DNA-directed RNA polymerase subunit beta">
    <location>
        <begin position="1"/>
        <end position="1342"/>
    </location>
</feature>
<sequence>MVYSYTEKKRIRKDFGKRPQVLDVPYLLSIQLDSFQKFIEQDPEGQYGLEAAFRSVFPIQSYSGNSELQYVSYRLGEPVFDVQECQIRGVTYSAPLRVKLRLVIYEREAPEGTVKDIKEQEVYMGEIPLMTDNGTFVINGTERVIVSQLHRSPGVFFDSDKGKTHSSGKVLYNARIIPYRGSWLDFEFDPKDNLFVRIDRRRKLPATIILRALNYTTEQILDLFFEKVVFEIRDNKLQMELIPERLRGETASFDIEANGKVYVEKGRRITARHIRQLEKDDIKHIEVPVEYIAGKVVSKDYVDESTGELICAANMELSLDLLAKLSQSGHKRIETLFTNDLDHGPYISETVRVDPTNDRLSALVEIYRMMRPGEPPTREAAESLFENLFFSEDRYDLSAVGRMKFNRSLLRDEIEGSGILSKDDIIDVMKKLIDIRNGKGEVDDIDHLGNRRIRSVGEMAENQFRVGLVRVERAVKERLSLGDLDTLMPQDMINAKPISAAVKEFFGSSQLSQFMDQNNPLSEITHKRRISALGPGGLTRERAGFEVRDVHPTHYGRVCPIETPEGPNIGLINSLSVYAQTNEYGFLETPYRRVVDGVVTDEIHYLSAIEEGNYVIAQANSNLDDEGHFVEDLVTCRSKGESSLFSRDQVDYMDVSTQQVVSVGASLIPFLEHDDANRALMGANMQRQAVPTLRADKPLVGTGMERAVAVDSGVTAVAKRGGTVQYVDASRIVIKVNEDEMYPGEAGIDIYNLTKYTRSNQNTCINQMPCVSLGEPVERGDVLADGPSTDLGELALGQNMRVAFMPWNGYNFEDSILVSERVVQEDRFTTIHIQELACVSRDTKLGPEEITADIPNVGEAALSKLDESGIVYIGAEVTGGDILVGKVTPKGETQLTPEEKLLRAIFGEKASDVKDSSLRVPNGVSGTVIDVQVFTRDGVEKDKRALEIEEMQLKQAKKDLSEELQILEAGLFSRIRAVLVSGGVEAEKLDKLPRDRWLELGLTDEEKQNQLEQLAEQYDELKHEFEKKLEAKRRKITQGDDLAPGVLKIVKVYLAVKRRIQPGDKMAGRHGNKGVISKINPIEDMPYDENGTPVDIVLNPLGVPSRMNIGQILETHLGMAAKGIGDKINAMLKQQQEVAKLREFIQRAYDLGADVRQKVDLSTFSDDEVLRLAENLRKGMPIATPVFDGAKEAEIKELLKLGDLPTSGQITLFDGRTGEQFERPVTVGYMYMLKLNHLVDDKMHARSTGSYSLVTQQPLGGKAQFGGQRFGEMEVWALEAYGAAYTLQEMLTVKSDDVNGRTKMYKNIVDGNHQMEPGMPESFNVLLKEIRSLGINIELEDE</sequence>
<comment type="function">
    <text evidence="1">DNA-dependent RNA polymerase catalyzes the transcription of DNA into RNA using the four ribonucleoside triphosphates as substrates.</text>
</comment>
<comment type="catalytic activity">
    <reaction evidence="1">
        <text>RNA(n) + a ribonucleoside 5'-triphosphate = RNA(n+1) + diphosphate</text>
        <dbReference type="Rhea" id="RHEA:21248"/>
        <dbReference type="Rhea" id="RHEA-COMP:14527"/>
        <dbReference type="Rhea" id="RHEA-COMP:17342"/>
        <dbReference type="ChEBI" id="CHEBI:33019"/>
        <dbReference type="ChEBI" id="CHEBI:61557"/>
        <dbReference type="ChEBI" id="CHEBI:140395"/>
        <dbReference type="EC" id="2.7.7.6"/>
    </reaction>
</comment>
<comment type="subunit">
    <text evidence="1">The RNAP catalytic core consists of 2 alpha, 1 beta, 1 beta' and 1 omega subunit. When a sigma factor is associated with the core the holoenzyme is formed, which can initiate transcription.</text>
</comment>
<comment type="similarity">
    <text evidence="1">Belongs to the RNA polymerase beta chain family.</text>
</comment>
<accession>B4TQJ5</accession>
<dbReference type="EC" id="2.7.7.6" evidence="1"/>
<dbReference type="EMBL" id="CP001127">
    <property type="protein sequence ID" value="ACF91751.1"/>
    <property type="molecule type" value="Genomic_DNA"/>
</dbReference>
<dbReference type="RefSeq" id="WP_000263105.1">
    <property type="nucleotide sequence ID" value="NC_011094.1"/>
</dbReference>
<dbReference type="SMR" id="B4TQJ5"/>
<dbReference type="KEGG" id="sew:SeSA_A4364"/>
<dbReference type="HOGENOM" id="CLU_000524_4_0_6"/>
<dbReference type="Proteomes" id="UP000001865">
    <property type="component" value="Chromosome"/>
</dbReference>
<dbReference type="GO" id="GO:0000428">
    <property type="term" value="C:DNA-directed RNA polymerase complex"/>
    <property type="evidence" value="ECO:0007669"/>
    <property type="project" value="UniProtKB-KW"/>
</dbReference>
<dbReference type="GO" id="GO:0003677">
    <property type="term" value="F:DNA binding"/>
    <property type="evidence" value="ECO:0007669"/>
    <property type="project" value="UniProtKB-UniRule"/>
</dbReference>
<dbReference type="GO" id="GO:0003899">
    <property type="term" value="F:DNA-directed RNA polymerase activity"/>
    <property type="evidence" value="ECO:0007669"/>
    <property type="project" value="UniProtKB-UniRule"/>
</dbReference>
<dbReference type="GO" id="GO:0032549">
    <property type="term" value="F:ribonucleoside binding"/>
    <property type="evidence" value="ECO:0007669"/>
    <property type="project" value="InterPro"/>
</dbReference>
<dbReference type="GO" id="GO:0006351">
    <property type="term" value="P:DNA-templated transcription"/>
    <property type="evidence" value="ECO:0007669"/>
    <property type="project" value="UniProtKB-UniRule"/>
</dbReference>
<dbReference type="CDD" id="cd00653">
    <property type="entry name" value="RNA_pol_B_RPB2"/>
    <property type="match status" value="1"/>
</dbReference>
<dbReference type="FunFam" id="2.30.150.10:FF:000001">
    <property type="entry name" value="DNA-directed RNA polymerase subunit beta"/>
    <property type="match status" value="1"/>
</dbReference>
<dbReference type="FunFam" id="2.40.270.10:FF:000003">
    <property type="entry name" value="DNA-directed RNA polymerase subunit beta"/>
    <property type="match status" value="1"/>
</dbReference>
<dbReference type="FunFam" id="2.40.270.10:FF:000004">
    <property type="entry name" value="DNA-directed RNA polymerase subunit beta"/>
    <property type="match status" value="1"/>
</dbReference>
<dbReference type="FunFam" id="2.40.50.100:FF:000006">
    <property type="entry name" value="DNA-directed RNA polymerase subunit beta"/>
    <property type="match status" value="1"/>
</dbReference>
<dbReference type="FunFam" id="2.40.50.150:FF:000001">
    <property type="entry name" value="DNA-directed RNA polymerase subunit beta"/>
    <property type="match status" value="1"/>
</dbReference>
<dbReference type="FunFam" id="3.90.1100.10:FF:000002">
    <property type="entry name" value="DNA-directed RNA polymerase subunit beta"/>
    <property type="match status" value="1"/>
</dbReference>
<dbReference type="FunFam" id="3.90.1110.10:FF:000001">
    <property type="entry name" value="DNA-directed RNA polymerase subunit beta"/>
    <property type="match status" value="1"/>
</dbReference>
<dbReference type="FunFam" id="3.90.1110.10:FF:000004">
    <property type="entry name" value="DNA-directed RNA polymerase subunit beta"/>
    <property type="match status" value="1"/>
</dbReference>
<dbReference type="FunFam" id="3.90.1800.10:FF:000001">
    <property type="entry name" value="DNA-directed RNA polymerase subunit beta"/>
    <property type="match status" value="1"/>
</dbReference>
<dbReference type="Gene3D" id="2.40.50.100">
    <property type="match status" value="1"/>
</dbReference>
<dbReference type="Gene3D" id="2.40.50.150">
    <property type="match status" value="1"/>
</dbReference>
<dbReference type="Gene3D" id="3.90.1100.10">
    <property type="match status" value="2"/>
</dbReference>
<dbReference type="Gene3D" id="6.10.140.1670">
    <property type="match status" value="1"/>
</dbReference>
<dbReference type="Gene3D" id="2.30.150.10">
    <property type="entry name" value="DNA-directed RNA polymerase, beta subunit, external 1 domain"/>
    <property type="match status" value="1"/>
</dbReference>
<dbReference type="Gene3D" id="2.40.270.10">
    <property type="entry name" value="DNA-directed RNA polymerase, subunit 2, domain 6"/>
    <property type="match status" value="1"/>
</dbReference>
<dbReference type="Gene3D" id="3.90.1800.10">
    <property type="entry name" value="RNA polymerase alpha subunit dimerisation domain"/>
    <property type="match status" value="1"/>
</dbReference>
<dbReference type="Gene3D" id="3.90.1110.10">
    <property type="entry name" value="RNA polymerase Rpb2, domain 2"/>
    <property type="match status" value="1"/>
</dbReference>
<dbReference type="HAMAP" id="MF_01321">
    <property type="entry name" value="RNApol_bact_RpoB"/>
    <property type="match status" value="1"/>
</dbReference>
<dbReference type="InterPro" id="IPR042107">
    <property type="entry name" value="DNA-dir_RNA_pol_bsu_ext_1_sf"/>
</dbReference>
<dbReference type="InterPro" id="IPR019462">
    <property type="entry name" value="DNA-dir_RNA_pol_bsu_external_1"/>
</dbReference>
<dbReference type="InterPro" id="IPR015712">
    <property type="entry name" value="DNA-dir_RNA_pol_su2"/>
</dbReference>
<dbReference type="InterPro" id="IPR007120">
    <property type="entry name" value="DNA-dir_RNAP_su2_dom"/>
</dbReference>
<dbReference type="InterPro" id="IPR037033">
    <property type="entry name" value="DNA-dir_RNAP_su2_hyb_sf"/>
</dbReference>
<dbReference type="InterPro" id="IPR010243">
    <property type="entry name" value="RNA_pol_bsu_bac"/>
</dbReference>
<dbReference type="InterPro" id="IPR007121">
    <property type="entry name" value="RNA_pol_bsu_CS"/>
</dbReference>
<dbReference type="InterPro" id="IPR007644">
    <property type="entry name" value="RNA_pol_bsu_protrusion"/>
</dbReference>
<dbReference type="InterPro" id="IPR007642">
    <property type="entry name" value="RNA_pol_Rpb2_2"/>
</dbReference>
<dbReference type="InterPro" id="IPR037034">
    <property type="entry name" value="RNA_pol_Rpb2_2_sf"/>
</dbReference>
<dbReference type="InterPro" id="IPR007645">
    <property type="entry name" value="RNA_pol_Rpb2_3"/>
</dbReference>
<dbReference type="InterPro" id="IPR007641">
    <property type="entry name" value="RNA_pol_Rpb2_7"/>
</dbReference>
<dbReference type="InterPro" id="IPR014724">
    <property type="entry name" value="RNA_pol_RPB2_OB-fold"/>
</dbReference>
<dbReference type="NCBIfam" id="NF001616">
    <property type="entry name" value="PRK00405.1"/>
    <property type="match status" value="1"/>
</dbReference>
<dbReference type="NCBIfam" id="TIGR02013">
    <property type="entry name" value="rpoB"/>
    <property type="match status" value="1"/>
</dbReference>
<dbReference type="PANTHER" id="PTHR20856">
    <property type="entry name" value="DNA-DIRECTED RNA POLYMERASE I SUBUNIT 2"/>
    <property type="match status" value="1"/>
</dbReference>
<dbReference type="Pfam" id="PF04563">
    <property type="entry name" value="RNA_pol_Rpb2_1"/>
    <property type="match status" value="1"/>
</dbReference>
<dbReference type="Pfam" id="PF04561">
    <property type="entry name" value="RNA_pol_Rpb2_2"/>
    <property type="match status" value="2"/>
</dbReference>
<dbReference type="Pfam" id="PF04565">
    <property type="entry name" value="RNA_pol_Rpb2_3"/>
    <property type="match status" value="1"/>
</dbReference>
<dbReference type="Pfam" id="PF10385">
    <property type="entry name" value="RNA_pol_Rpb2_45"/>
    <property type="match status" value="1"/>
</dbReference>
<dbReference type="Pfam" id="PF00562">
    <property type="entry name" value="RNA_pol_Rpb2_6"/>
    <property type="match status" value="1"/>
</dbReference>
<dbReference type="Pfam" id="PF04560">
    <property type="entry name" value="RNA_pol_Rpb2_7"/>
    <property type="match status" value="1"/>
</dbReference>
<dbReference type="SUPFAM" id="SSF64484">
    <property type="entry name" value="beta and beta-prime subunits of DNA dependent RNA-polymerase"/>
    <property type="match status" value="1"/>
</dbReference>
<dbReference type="PROSITE" id="PS01166">
    <property type="entry name" value="RNA_POL_BETA"/>
    <property type="match status" value="1"/>
</dbReference>
<gene>
    <name evidence="1" type="primary">rpoB</name>
    <name type="ordered locus">SeSA_A4364</name>
</gene>
<evidence type="ECO:0000255" key="1">
    <source>
        <dbReference type="HAMAP-Rule" id="MF_01321"/>
    </source>
</evidence>
<organism>
    <name type="scientific">Salmonella schwarzengrund (strain CVM19633)</name>
    <dbReference type="NCBI Taxonomy" id="439843"/>
    <lineage>
        <taxon>Bacteria</taxon>
        <taxon>Pseudomonadati</taxon>
        <taxon>Pseudomonadota</taxon>
        <taxon>Gammaproteobacteria</taxon>
        <taxon>Enterobacterales</taxon>
        <taxon>Enterobacteriaceae</taxon>
        <taxon>Salmonella</taxon>
    </lineage>
</organism>
<keyword id="KW-0240">DNA-directed RNA polymerase</keyword>
<keyword id="KW-0548">Nucleotidyltransferase</keyword>
<keyword id="KW-0804">Transcription</keyword>
<keyword id="KW-0808">Transferase</keyword>
<protein>
    <recommendedName>
        <fullName evidence="1">DNA-directed RNA polymerase subunit beta</fullName>
        <shortName evidence="1">RNAP subunit beta</shortName>
        <ecNumber evidence="1">2.7.7.6</ecNumber>
    </recommendedName>
    <alternativeName>
        <fullName evidence="1">RNA polymerase subunit beta</fullName>
    </alternativeName>
    <alternativeName>
        <fullName evidence="1">Transcriptase subunit beta</fullName>
    </alternativeName>
</protein>